<organism>
    <name type="scientific">Prochlorococcus marinus (strain NATL2A)</name>
    <dbReference type="NCBI Taxonomy" id="59920"/>
    <lineage>
        <taxon>Bacteria</taxon>
        <taxon>Bacillati</taxon>
        <taxon>Cyanobacteriota</taxon>
        <taxon>Cyanophyceae</taxon>
        <taxon>Synechococcales</taxon>
        <taxon>Prochlorococcaceae</taxon>
        <taxon>Prochlorococcus</taxon>
    </lineage>
</organism>
<sequence>MAAVSLSVSTVKPLGDRVFVKVSESEEKTAGGILLPDTAKEKPQVGEVAQVGPGKRNEDGSRQSPEVSVGDKVLYSKYAGTDIKLGSDEYVLLSEKDILAVVN</sequence>
<gene>
    <name evidence="1" type="primary">groES</name>
    <name evidence="1" type="synonym">groS</name>
    <name type="ordered locus">PMN2A_0969</name>
</gene>
<reference key="1">
    <citation type="journal article" date="2007" name="PLoS Genet.">
        <title>Patterns and implications of gene gain and loss in the evolution of Prochlorococcus.</title>
        <authorList>
            <person name="Kettler G.C."/>
            <person name="Martiny A.C."/>
            <person name="Huang K."/>
            <person name="Zucker J."/>
            <person name="Coleman M.L."/>
            <person name="Rodrigue S."/>
            <person name="Chen F."/>
            <person name="Lapidus A."/>
            <person name="Ferriera S."/>
            <person name="Johnson J."/>
            <person name="Steglich C."/>
            <person name="Church G.M."/>
            <person name="Richardson P."/>
            <person name="Chisholm S.W."/>
        </authorList>
    </citation>
    <scope>NUCLEOTIDE SEQUENCE [LARGE SCALE GENOMIC DNA]</scope>
    <source>
        <strain>NATL2A</strain>
    </source>
</reference>
<proteinExistence type="inferred from homology"/>
<accession>Q46J69</accession>
<dbReference type="EMBL" id="CP000095">
    <property type="protein sequence ID" value="AAZ58459.1"/>
    <property type="molecule type" value="Genomic_DNA"/>
</dbReference>
<dbReference type="RefSeq" id="WP_011295315.1">
    <property type="nucleotide sequence ID" value="NC_007335.2"/>
</dbReference>
<dbReference type="SMR" id="Q46J69"/>
<dbReference type="STRING" id="59920.PMN2A_0969"/>
<dbReference type="KEGG" id="pmn:PMN2A_0969"/>
<dbReference type="HOGENOM" id="CLU_132825_2_1_3"/>
<dbReference type="OrthoDB" id="9806791at2"/>
<dbReference type="PhylomeDB" id="Q46J69"/>
<dbReference type="Proteomes" id="UP000002535">
    <property type="component" value="Chromosome"/>
</dbReference>
<dbReference type="GO" id="GO:0005737">
    <property type="term" value="C:cytoplasm"/>
    <property type="evidence" value="ECO:0007669"/>
    <property type="project" value="UniProtKB-SubCell"/>
</dbReference>
<dbReference type="GO" id="GO:0005524">
    <property type="term" value="F:ATP binding"/>
    <property type="evidence" value="ECO:0007669"/>
    <property type="project" value="InterPro"/>
</dbReference>
<dbReference type="GO" id="GO:0046872">
    <property type="term" value="F:metal ion binding"/>
    <property type="evidence" value="ECO:0007669"/>
    <property type="project" value="TreeGrafter"/>
</dbReference>
<dbReference type="GO" id="GO:0044183">
    <property type="term" value="F:protein folding chaperone"/>
    <property type="evidence" value="ECO:0007669"/>
    <property type="project" value="InterPro"/>
</dbReference>
<dbReference type="GO" id="GO:0051087">
    <property type="term" value="F:protein-folding chaperone binding"/>
    <property type="evidence" value="ECO:0007669"/>
    <property type="project" value="TreeGrafter"/>
</dbReference>
<dbReference type="GO" id="GO:0051082">
    <property type="term" value="F:unfolded protein binding"/>
    <property type="evidence" value="ECO:0007669"/>
    <property type="project" value="TreeGrafter"/>
</dbReference>
<dbReference type="GO" id="GO:0051085">
    <property type="term" value="P:chaperone cofactor-dependent protein refolding"/>
    <property type="evidence" value="ECO:0007669"/>
    <property type="project" value="TreeGrafter"/>
</dbReference>
<dbReference type="CDD" id="cd00320">
    <property type="entry name" value="cpn10"/>
    <property type="match status" value="1"/>
</dbReference>
<dbReference type="FunFam" id="2.30.33.40:FF:000001">
    <property type="entry name" value="10 kDa chaperonin"/>
    <property type="match status" value="1"/>
</dbReference>
<dbReference type="Gene3D" id="2.30.33.40">
    <property type="entry name" value="GroES chaperonin"/>
    <property type="match status" value="1"/>
</dbReference>
<dbReference type="HAMAP" id="MF_00580">
    <property type="entry name" value="CH10"/>
    <property type="match status" value="1"/>
</dbReference>
<dbReference type="InterPro" id="IPR020818">
    <property type="entry name" value="Chaperonin_GroES"/>
</dbReference>
<dbReference type="InterPro" id="IPR037124">
    <property type="entry name" value="Chaperonin_GroES_sf"/>
</dbReference>
<dbReference type="InterPro" id="IPR018369">
    <property type="entry name" value="Chaprnonin_Cpn10_CS"/>
</dbReference>
<dbReference type="InterPro" id="IPR011032">
    <property type="entry name" value="GroES-like_sf"/>
</dbReference>
<dbReference type="NCBIfam" id="NF001530">
    <property type="entry name" value="PRK00364.1-6"/>
    <property type="match status" value="1"/>
</dbReference>
<dbReference type="NCBIfam" id="NF001531">
    <property type="entry name" value="PRK00364.2-2"/>
    <property type="match status" value="1"/>
</dbReference>
<dbReference type="NCBIfam" id="NF001533">
    <property type="entry name" value="PRK00364.2-4"/>
    <property type="match status" value="1"/>
</dbReference>
<dbReference type="NCBIfam" id="NF001534">
    <property type="entry name" value="PRK00364.2-5"/>
    <property type="match status" value="1"/>
</dbReference>
<dbReference type="PANTHER" id="PTHR10772">
    <property type="entry name" value="10 KDA HEAT SHOCK PROTEIN"/>
    <property type="match status" value="1"/>
</dbReference>
<dbReference type="PANTHER" id="PTHR10772:SF58">
    <property type="entry name" value="CO-CHAPERONIN GROES"/>
    <property type="match status" value="1"/>
</dbReference>
<dbReference type="Pfam" id="PF00166">
    <property type="entry name" value="Cpn10"/>
    <property type="match status" value="1"/>
</dbReference>
<dbReference type="PRINTS" id="PR00297">
    <property type="entry name" value="CHAPERONIN10"/>
</dbReference>
<dbReference type="SMART" id="SM00883">
    <property type="entry name" value="Cpn10"/>
    <property type="match status" value="1"/>
</dbReference>
<dbReference type="SUPFAM" id="SSF50129">
    <property type="entry name" value="GroES-like"/>
    <property type="match status" value="1"/>
</dbReference>
<dbReference type="PROSITE" id="PS00681">
    <property type="entry name" value="CHAPERONINS_CPN10"/>
    <property type="match status" value="1"/>
</dbReference>
<comment type="function">
    <text evidence="1">Together with the chaperonin GroEL, plays an essential role in assisting protein folding. The GroEL-GroES system forms a nano-cage that allows encapsulation of the non-native substrate proteins and provides a physical environment optimized to promote and accelerate protein folding. GroES binds to the apical surface of the GroEL ring, thereby capping the opening of the GroEL channel.</text>
</comment>
<comment type="subunit">
    <text evidence="1">Heptamer of 7 subunits arranged in a ring. Interacts with the chaperonin GroEL.</text>
</comment>
<comment type="subcellular location">
    <subcellularLocation>
        <location evidence="1">Cytoplasm</location>
    </subcellularLocation>
</comment>
<comment type="similarity">
    <text evidence="1">Belongs to the GroES chaperonin family.</text>
</comment>
<name>CH10_PROMT</name>
<feature type="chain" id="PRO_1000025330" description="Co-chaperonin GroES">
    <location>
        <begin position="1"/>
        <end position="103"/>
    </location>
</feature>
<feature type="region of interest" description="Disordered" evidence="2">
    <location>
        <begin position="31"/>
        <end position="67"/>
    </location>
</feature>
<protein>
    <recommendedName>
        <fullName evidence="1">Co-chaperonin GroES</fullName>
    </recommendedName>
    <alternativeName>
        <fullName evidence="1">10 kDa chaperonin</fullName>
    </alternativeName>
    <alternativeName>
        <fullName evidence="1">Chaperonin-10</fullName>
        <shortName evidence="1">Cpn10</shortName>
    </alternativeName>
</protein>
<evidence type="ECO:0000255" key="1">
    <source>
        <dbReference type="HAMAP-Rule" id="MF_00580"/>
    </source>
</evidence>
<evidence type="ECO:0000256" key="2">
    <source>
        <dbReference type="SAM" id="MobiDB-lite"/>
    </source>
</evidence>
<keyword id="KW-0143">Chaperone</keyword>
<keyword id="KW-0963">Cytoplasm</keyword>
<keyword id="KW-1185">Reference proteome</keyword>